<protein>
    <recommendedName>
        <fullName evidence="6">Leukocyte cell-derived chemotaxin 1</fullName>
    </recommendedName>
    <alternativeName>
        <fullName evidence="7">Chondromodulin</fullName>
    </alternativeName>
    <component>
        <recommendedName>
            <fullName>Chondrosurfactant protein</fullName>
            <shortName>CH-SP</shortName>
        </recommendedName>
    </component>
    <component>
        <recommendedName>
            <fullName>Chondromodulin-1</fullName>
        </recommendedName>
        <alternativeName>
            <fullName>Chondromodulin-I</fullName>
            <shortName>ChM-I</shortName>
        </alternativeName>
    </component>
</protein>
<keyword id="KW-0891">Chondrogenesis</keyword>
<keyword id="KW-0165">Cleavage on pair of basic residues</keyword>
<keyword id="KW-0217">Developmental protein</keyword>
<keyword id="KW-0221">Differentiation</keyword>
<keyword id="KW-1015">Disulfide bond</keyword>
<keyword id="KW-0272">Extracellular matrix</keyword>
<keyword id="KW-0325">Glycoprotein</keyword>
<keyword id="KW-0472">Membrane</keyword>
<keyword id="KW-1185">Reference proteome</keyword>
<keyword id="KW-0964">Secreted</keyword>
<keyword id="KW-0812">Transmembrane</keyword>
<keyword id="KW-1133">Transmembrane helix</keyword>
<proteinExistence type="evidence at protein level"/>
<sequence>MTENSDKVPITMVGPEDVEFCSPPAYATVTVKPSGSPTRLLKVGAVVLISGAVLLLFGAIGAFYFWKGNDNHIYNVHYTMSINGRLQDASMEIDAANNLETFKMGSGAEEAIEVNDFQNGITGIRFAGGEKCYIKAQVKARIPEVSTGTKQSISELEGKIMPVKYEENSLIWVAVDQPVKDNSFLSSKILEFCGDLPIFWLKPMYPKEIPRERREVVRSSAPSTTRRPHSEPRGNAGPGRLSNRTRPSVQDDEEPFNPDNPYHQQEGESMTFDPRLDHEGICCIECRRSYTHCQKICEPLGGYYPWPYNYQGCRSACRVVMPCSWWVARILGMV</sequence>
<dbReference type="EMBL" id="AF051425">
    <property type="protein sequence ID" value="AAC05574.1"/>
    <property type="molecule type" value="mRNA"/>
</dbReference>
<dbReference type="RefSeq" id="NP_110481.1">
    <property type="nucleotide sequence ID" value="NM_030854.1"/>
</dbReference>
<dbReference type="FunCoup" id="O70367">
    <property type="interactions" value="15"/>
</dbReference>
<dbReference type="STRING" id="10116.ENSRNOP00000017400"/>
<dbReference type="GlyCosmos" id="O70367">
    <property type="glycosylation" value="1 site, No reported glycans"/>
</dbReference>
<dbReference type="GlyGen" id="O70367">
    <property type="glycosylation" value="1 site"/>
</dbReference>
<dbReference type="PhosphoSitePlus" id="O70367"/>
<dbReference type="PaxDb" id="10116-ENSRNOP00000017400"/>
<dbReference type="GeneID" id="81512"/>
<dbReference type="KEGG" id="rno:81512"/>
<dbReference type="UCSC" id="RGD:620176">
    <property type="organism name" value="rat"/>
</dbReference>
<dbReference type="AGR" id="RGD:620176"/>
<dbReference type="CTD" id="11061"/>
<dbReference type="RGD" id="620176">
    <property type="gene designation" value="Cnmd"/>
</dbReference>
<dbReference type="eggNOG" id="ENOG502QVPC">
    <property type="taxonomic scope" value="Eukaryota"/>
</dbReference>
<dbReference type="InParanoid" id="O70367"/>
<dbReference type="OrthoDB" id="14521at9989"/>
<dbReference type="PhylomeDB" id="O70367"/>
<dbReference type="PRO" id="PR:O70367"/>
<dbReference type="Proteomes" id="UP000002494">
    <property type="component" value="Unplaced"/>
</dbReference>
<dbReference type="GO" id="GO:0012505">
    <property type="term" value="C:endomembrane system"/>
    <property type="evidence" value="ECO:0007669"/>
    <property type="project" value="UniProtKB-SubCell"/>
</dbReference>
<dbReference type="GO" id="GO:0005576">
    <property type="term" value="C:extracellular region"/>
    <property type="evidence" value="ECO:0007669"/>
    <property type="project" value="UniProtKB-KW"/>
</dbReference>
<dbReference type="GO" id="GO:0016020">
    <property type="term" value="C:membrane"/>
    <property type="evidence" value="ECO:0007669"/>
    <property type="project" value="UniProtKB-KW"/>
</dbReference>
<dbReference type="GO" id="GO:0051216">
    <property type="term" value="P:cartilage development"/>
    <property type="evidence" value="ECO:0007669"/>
    <property type="project" value="UniProtKB-KW"/>
</dbReference>
<dbReference type="GO" id="GO:0001886">
    <property type="term" value="P:endothelial cell morphogenesis"/>
    <property type="evidence" value="ECO:0000266"/>
    <property type="project" value="RGD"/>
</dbReference>
<dbReference type="GO" id="GO:0016525">
    <property type="term" value="P:negative regulation of angiogenesis"/>
    <property type="evidence" value="ECO:0000266"/>
    <property type="project" value="RGD"/>
</dbReference>
<dbReference type="GO" id="GO:0001937">
    <property type="term" value="P:negative regulation of endothelial cell proliferation"/>
    <property type="evidence" value="ECO:0000266"/>
    <property type="project" value="RGD"/>
</dbReference>
<dbReference type="GO" id="GO:0030948">
    <property type="term" value="P:negative regulation of vascular endothelial growth factor receptor signaling pathway"/>
    <property type="evidence" value="ECO:0000266"/>
    <property type="project" value="RGD"/>
</dbReference>
<dbReference type="FunFam" id="3.30.390.150:FF:000001">
    <property type="entry name" value="leukocyte cell-derived chemotaxin 1"/>
    <property type="match status" value="1"/>
</dbReference>
<dbReference type="Gene3D" id="3.30.390.150">
    <property type="match status" value="1"/>
</dbReference>
<dbReference type="InterPro" id="IPR007084">
    <property type="entry name" value="BRICHOS_dom"/>
</dbReference>
<dbReference type="InterPro" id="IPR043405">
    <property type="entry name" value="Chondromodulin/Tenomodulin"/>
</dbReference>
<dbReference type="PANTHER" id="PTHR14064">
    <property type="entry name" value="CHONDROMODULIN-RELATED"/>
    <property type="match status" value="1"/>
</dbReference>
<dbReference type="PANTHER" id="PTHR14064:SF6">
    <property type="entry name" value="LEUKOCYTE CELL-DERIVED CHEMOTAXIN 1"/>
    <property type="match status" value="1"/>
</dbReference>
<dbReference type="Pfam" id="PF04089">
    <property type="entry name" value="BRICHOS"/>
    <property type="match status" value="1"/>
</dbReference>
<dbReference type="SMART" id="SM01039">
    <property type="entry name" value="BRICHOS"/>
    <property type="match status" value="1"/>
</dbReference>
<dbReference type="PROSITE" id="PS50869">
    <property type="entry name" value="BRICHOS"/>
    <property type="match status" value="1"/>
</dbReference>
<gene>
    <name evidence="7" type="primary">Cnmd</name>
    <name evidence="7" type="synonym">Chmi</name>
    <name evidence="7" type="synonym">Lect1</name>
</gene>
<reference key="1">
    <citation type="journal article" date="2001" name="Invest. Ophthalmol. Vis. Sci.">
        <title>Expression and localization of angiogenic inhibitory factor, chondromodulin-I, in adult rat eye.</title>
        <authorList>
            <person name="Funaki H."/>
            <person name="Sawaguchi S."/>
            <person name="Yaoeda K."/>
            <person name="Koyama Y."/>
            <person name="Yaoita E."/>
            <person name="Funaki S."/>
            <person name="Shirakashi M."/>
            <person name="Oshima Y."/>
            <person name="Shukunami C."/>
            <person name="Hiraki Y."/>
            <person name="Abe H."/>
            <person name="Yamamoto T."/>
        </authorList>
    </citation>
    <scope>NUCLEOTIDE SEQUENCE [MRNA]</scope>
    <source>
        <strain>Wistar Kyoto</strain>
        <tissue>Cartilage</tissue>
    </source>
</reference>
<reference key="2">
    <citation type="journal article" date="2006" name="Nat. Med.">
        <title>Chondromodulin-I maintains cardiac valvular function by preventing angiogenesis.</title>
        <authorList>
            <person name="Yoshioka M."/>
            <person name="Yuasa S."/>
            <person name="Matsumura K."/>
            <person name="Kimura K."/>
            <person name="Shiomi T."/>
            <person name="Kimura N."/>
            <person name="Shukunami C."/>
            <person name="Okada Y."/>
            <person name="Mukai M."/>
            <person name="Shin H."/>
            <person name="Yozu R."/>
            <person name="Sata M."/>
            <person name="Ogawa S."/>
            <person name="Hiraki Y."/>
            <person name="Fukuda K."/>
        </authorList>
    </citation>
    <scope>TISSUE SPECIFICITY</scope>
    <scope>DEVELOPMENTAL STAGE</scope>
</reference>
<comment type="function">
    <text evidence="1">Bifunctional growth regulator that stimulates the growth of cultured chondrocytes in the presence of basic fibroblast growth factor (FGF) but inhibits the growth of cultured vascular endothelial cells. May contribute to the rapid growth of cartilage and vascular invasion prior to the replacement of cartilage by bone during endochondral bone development. Inhibits in vitro tube formation and mobilization of endothelial cells. Plays a role as antiangiogenic factor in cardiac valves to suppress neovascularization (By similarity).</text>
</comment>
<comment type="subcellular location">
    <molecule>Chondromodulin-1</molecule>
    <subcellularLocation>
        <location evidence="1">Secreted</location>
        <location evidence="1">Extracellular space</location>
        <location evidence="1">Extracellular matrix</location>
    </subcellularLocation>
    <text evidence="1">Accumulated in the inter-territorial matrix of cartilage.</text>
</comment>
<comment type="subcellular location">
    <molecule>Chondrosurfactant protein</molecule>
    <subcellularLocation>
        <location evidence="6">Endomembrane system</location>
        <topology evidence="6">Single-pass membrane protein</topology>
    </subcellularLocation>
</comment>
<comment type="tissue specificity">
    <text evidence="5">Detected in cartilage, cardiac valves and valvular interstitial cells (at protein level). Expressed in eye.</text>
</comment>
<comment type="developmental stage">
    <text evidence="5">Expression first detected in heart at 9.5 dpc and persisted in the adult.</text>
</comment>
<comment type="PTM">
    <text evidence="1">After cleavage, the post-translationally modified ChM-I is secreted as a glycoprotein.</text>
</comment>
<comment type="similarity">
    <text evidence="6">Belongs to the chondromodulin-1 family.</text>
</comment>
<accession>O70367</accession>
<organism>
    <name type="scientific">Rattus norvegicus</name>
    <name type="common">Rat</name>
    <dbReference type="NCBI Taxonomy" id="10116"/>
    <lineage>
        <taxon>Eukaryota</taxon>
        <taxon>Metazoa</taxon>
        <taxon>Chordata</taxon>
        <taxon>Craniata</taxon>
        <taxon>Vertebrata</taxon>
        <taxon>Euteleostomi</taxon>
        <taxon>Mammalia</taxon>
        <taxon>Eutheria</taxon>
        <taxon>Euarchontoglires</taxon>
        <taxon>Glires</taxon>
        <taxon>Rodentia</taxon>
        <taxon>Myomorpha</taxon>
        <taxon>Muroidea</taxon>
        <taxon>Muridae</taxon>
        <taxon>Murinae</taxon>
        <taxon>Rattus</taxon>
    </lineage>
</organism>
<evidence type="ECO:0000250" key="1"/>
<evidence type="ECO:0000255" key="2"/>
<evidence type="ECO:0000255" key="3">
    <source>
        <dbReference type="PROSITE-ProRule" id="PRU00255"/>
    </source>
</evidence>
<evidence type="ECO:0000256" key="4">
    <source>
        <dbReference type="SAM" id="MobiDB-lite"/>
    </source>
</evidence>
<evidence type="ECO:0000269" key="5">
    <source>
    </source>
</evidence>
<evidence type="ECO:0000305" key="6"/>
<evidence type="ECO:0000312" key="7">
    <source>
        <dbReference type="RGD" id="620176"/>
    </source>
</evidence>
<feature type="chain" id="PRO_0000005352" description="Chondrosurfactant protein" evidence="1">
    <location>
        <begin position="1"/>
        <end position="210"/>
    </location>
</feature>
<feature type="propeptide" id="PRO_0000005353" evidence="1">
    <location>
        <begin position="211"/>
        <end position="214"/>
    </location>
</feature>
<feature type="chain" id="PRO_0000005354" description="Chondromodulin-1" evidence="1">
    <location>
        <begin position="215"/>
        <end position="334"/>
    </location>
</feature>
<feature type="transmembrane region" description="Helical" evidence="2">
    <location>
        <begin position="46"/>
        <end position="66"/>
    </location>
</feature>
<feature type="domain" description="BRICHOS" evidence="3">
    <location>
        <begin position="105"/>
        <end position="201"/>
    </location>
</feature>
<feature type="region of interest" description="Disordered" evidence="4">
    <location>
        <begin position="212"/>
        <end position="268"/>
    </location>
</feature>
<feature type="glycosylation site" description="N-linked (GlcNAc...) asparagine" evidence="2">
    <location>
        <position position="243"/>
    </location>
</feature>
<feature type="disulfide bond" evidence="1">
    <location>
        <begin position="132"/>
        <end position="193"/>
    </location>
</feature>
<feature type="disulfide bond" evidence="1">
    <location>
        <begin position="282"/>
        <end position="286"/>
    </location>
</feature>
<feature type="disulfide bond" evidence="1">
    <location>
        <begin position="283"/>
        <end position="323"/>
    </location>
</feature>
<feature type="disulfide bond" evidence="1">
    <location>
        <begin position="293"/>
        <end position="317"/>
    </location>
</feature>
<feature type="disulfide bond" evidence="1">
    <location>
        <begin position="297"/>
        <end position="313"/>
    </location>
</feature>
<name>CNMD_RAT</name>